<comment type="function">
    <text evidence="1">Has antimicrobial activity.</text>
</comment>
<comment type="subcellular location">
    <subcellularLocation>
        <location evidence="1">Secreted</location>
    </subcellularLocation>
</comment>
<comment type="tissue specificity">
    <text evidence="3">Lowly expressed in spleen, kidney and lung.</text>
</comment>
<comment type="similarity">
    <text evidence="6">Belongs to the beta-defensin family.</text>
</comment>
<comment type="online information" name="Platypus resources">
    <link uri="https://www.twinkl.ch/search?q=platypus"/>
</comment>
<feature type="signal peptide" evidence="2">
    <location>
        <begin position="1"/>
        <end position="20"/>
    </location>
</feature>
<feature type="chain" id="PRO_0000352729" description="Defensin-B6">
    <location>
        <begin position="21"/>
        <end position="77"/>
    </location>
</feature>
<feature type="disulfide bond" evidence="1">
    <location>
        <begin position="43"/>
        <end position="70"/>
    </location>
</feature>
<feature type="disulfide bond" evidence="1">
    <location>
        <begin position="50"/>
        <end position="64"/>
    </location>
</feature>
<feature type="disulfide bond" evidence="1">
    <location>
        <begin position="54"/>
        <end position="71"/>
    </location>
</feature>
<name>DEFB6_ORNAN</name>
<keyword id="KW-0044">Antibiotic</keyword>
<keyword id="KW-0929">Antimicrobial</keyword>
<keyword id="KW-0211">Defensin</keyword>
<keyword id="KW-1015">Disulfide bond</keyword>
<keyword id="KW-1185">Reference proteome</keyword>
<keyword id="KW-0964">Secreted</keyword>
<keyword id="KW-0732">Signal</keyword>
<evidence type="ECO:0000250" key="1"/>
<evidence type="ECO:0000255" key="2"/>
<evidence type="ECO:0000269" key="3">
    <source>
    </source>
</evidence>
<evidence type="ECO:0000303" key="4">
    <source>
    </source>
</evidence>
<evidence type="ECO:0000303" key="5">
    <source>
    </source>
</evidence>
<evidence type="ECO:0000305" key="6"/>
<evidence type="ECO:0000305" key="7">
    <source>
    </source>
</evidence>
<evidence type="ECO:0000305" key="8">
    <source>
    </source>
</evidence>
<sequence>MKTLFFLSVFIFLLLHLSPGKMEILLGSNGGARCDINKKSFDCYHRNGRCRFNCRKREYNNGDCSQYQSCCLPTRNL</sequence>
<organism>
    <name type="scientific">Ornithorhynchus anatinus</name>
    <name type="common">Duckbill platypus</name>
    <dbReference type="NCBI Taxonomy" id="9258"/>
    <lineage>
        <taxon>Eukaryota</taxon>
        <taxon>Metazoa</taxon>
        <taxon>Chordata</taxon>
        <taxon>Craniata</taxon>
        <taxon>Vertebrata</taxon>
        <taxon>Euteleostomi</taxon>
        <taxon>Mammalia</taxon>
        <taxon>Monotremata</taxon>
        <taxon>Ornithorhynchidae</taxon>
        <taxon>Ornithorhynchus</taxon>
    </lineage>
</organism>
<proteinExistence type="evidence at transcript level"/>
<reference key="1">
    <citation type="journal article" date="2008" name="Genome Res.">
        <title>Defensins and the convergent evolution of platypus and reptile venom genes.</title>
        <authorList>
            <person name="Whittington C.M."/>
            <person name="Papenfuss A.T."/>
            <person name="Bansal P."/>
            <person name="Torres A.M."/>
            <person name="Wong E.S."/>
            <person name="Deakin J.E."/>
            <person name="Graves T."/>
            <person name="Alsop A."/>
            <person name="Schatzkamer K."/>
            <person name="Kremitzki C."/>
            <person name="Ponting C.P."/>
            <person name="Temple-Smith P."/>
            <person name="Warren W.C."/>
            <person name="Kuchel P.W."/>
            <person name="Belov K."/>
        </authorList>
    </citation>
    <scope>NUCLEOTIDE SEQUENCE [MRNA]</scope>
</reference>
<reference key="2">
    <citation type="journal article" date="2008" name="Toxicon">
        <title>Expression patterns of platypus defensin and related venom genes across a range of tissue types reveal the possibility of broader functions for OvDLPs than previously suspected.</title>
        <authorList>
            <person name="Whittington C.M."/>
            <person name="Papenfuss A.T."/>
            <person name="Kuchel P.W."/>
            <person name="Belov K."/>
        </authorList>
    </citation>
    <scope>TISSUE SPECIFICITY</scope>
</reference>
<dbReference type="SMR" id="P0C8B0"/>
<dbReference type="Ensembl" id="ENSOANT00000069433.1">
    <property type="protein sequence ID" value="ENSOANP00000053774.1"/>
    <property type="gene ID" value="ENSOANG00000046212.1"/>
</dbReference>
<dbReference type="InParanoid" id="P0C8B0"/>
<dbReference type="Proteomes" id="UP000002279">
    <property type="component" value="Chromosome X1"/>
</dbReference>
<dbReference type="Bgee" id="ENSOANG00000046212">
    <property type="expression patterns" value="Expressed in adult mammalian kidney"/>
</dbReference>
<dbReference type="GO" id="GO:0005576">
    <property type="term" value="C:extracellular region"/>
    <property type="evidence" value="ECO:0007669"/>
    <property type="project" value="UniProtKB-SubCell"/>
</dbReference>
<dbReference type="GO" id="GO:0042742">
    <property type="term" value="P:defense response to bacterium"/>
    <property type="evidence" value="ECO:0007669"/>
    <property type="project" value="UniProtKB-KW"/>
</dbReference>
<dbReference type="GO" id="GO:0045087">
    <property type="term" value="P:innate immune response"/>
    <property type="evidence" value="ECO:0007669"/>
    <property type="project" value="InterPro"/>
</dbReference>
<dbReference type="InterPro" id="IPR025933">
    <property type="entry name" value="Beta_defensin_dom"/>
</dbReference>
<dbReference type="Pfam" id="PF13841">
    <property type="entry name" value="Defensin_beta_2"/>
    <property type="match status" value="1"/>
</dbReference>
<accession>P0C8B0</accession>
<protein>
    <recommendedName>
        <fullName evidence="7 8">Defensin-B6</fullName>
        <shortName evidence="4">DefB6</shortName>
        <shortName evidence="5">OaDefB6</shortName>
    </recommendedName>
</protein>